<dbReference type="EC" id="3.1.3.48"/>
<dbReference type="EMBL" id="CP000029">
    <property type="protein sequence ID" value="AAW55121.1"/>
    <property type="molecule type" value="Genomic_DNA"/>
</dbReference>
<dbReference type="RefSeq" id="WP_002457126.1">
    <property type="nucleotide sequence ID" value="NC_002976.3"/>
</dbReference>
<dbReference type="SMR" id="Q5HMA8"/>
<dbReference type="STRING" id="176279.SERP1721"/>
<dbReference type="KEGG" id="ser:SERP1721"/>
<dbReference type="eggNOG" id="COG0394">
    <property type="taxonomic scope" value="Bacteria"/>
</dbReference>
<dbReference type="HOGENOM" id="CLU_071415_1_2_9"/>
<dbReference type="Proteomes" id="UP000000531">
    <property type="component" value="Chromosome"/>
</dbReference>
<dbReference type="GO" id="GO:0004725">
    <property type="term" value="F:protein tyrosine phosphatase activity"/>
    <property type="evidence" value="ECO:0007669"/>
    <property type="project" value="UniProtKB-EC"/>
</dbReference>
<dbReference type="CDD" id="cd16344">
    <property type="entry name" value="LMWPAP"/>
    <property type="match status" value="1"/>
</dbReference>
<dbReference type="Gene3D" id="3.40.50.2300">
    <property type="match status" value="1"/>
</dbReference>
<dbReference type="InterPro" id="IPR050438">
    <property type="entry name" value="LMW_PTPase"/>
</dbReference>
<dbReference type="InterPro" id="IPR023485">
    <property type="entry name" value="Ptyr_pPase"/>
</dbReference>
<dbReference type="InterPro" id="IPR036196">
    <property type="entry name" value="Ptyr_pPase_sf"/>
</dbReference>
<dbReference type="InterPro" id="IPR017867">
    <property type="entry name" value="Tyr_phospatase_low_mol_wt"/>
</dbReference>
<dbReference type="PANTHER" id="PTHR11717">
    <property type="entry name" value="LOW MOLECULAR WEIGHT PROTEIN TYROSINE PHOSPHATASE"/>
    <property type="match status" value="1"/>
</dbReference>
<dbReference type="PANTHER" id="PTHR11717:SF31">
    <property type="entry name" value="LOW MOLECULAR WEIGHT PROTEIN-TYROSINE-PHOSPHATASE ETP-RELATED"/>
    <property type="match status" value="1"/>
</dbReference>
<dbReference type="Pfam" id="PF01451">
    <property type="entry name" value="LMWPc"/>
    <property type="match status" value="1"/>
</dbReference>
<dbReference type="PRINTS" id="PR00719">
    <property type="entry name" value="LMWPTPASE"/>
</dbReference>
<dbReference type="SMART" id="SM00226">
    <property type="entry name" value="LMWPc"/>
    <property type="match status" value="1"/>
</dbReference>
<dbReference type="SUPFAM" id="SSF52788">
    <property type="entry name" value="Phosphotyrosine protein phosphatases I"/>
    <property type="match status" value="1"/>
</dbReference>
<accession>Q5HMA8</accession>
<proteinExistence type="inferred from homology"/>
<comment type="function">
    <text evidence="1">Dephosphorylates the phosphotyrosine-containing proteins.</text>
</comment>
<comment type="catalytic activity">
    <reaction>
        <text>O-phospho-L-tyrosyl-[protein] + H2O = L-tyrosyl-[protein] + phosphate</text>
        <dbReference type="Rhea" id="RHEA:10684"/>
        <dbReference type="Rhea" id="RHEA-COMP:10136"/>
        <dbReference type="Rhea" id="RHEA-COMP:20101"/>
        <dbReference type="ChEBI" id="CHEBI:15377"/>
        <dbReference type="ChEBI" id="CHEBI:43474"/>
        <dbReference type="ChEBI" id="CHEBI:46858"/>
        <dbReference type="ChEBI" id="CHEBI:61978"/>
        <dbReference type="EC" id="3.1.3.48"/>
    </reaction>
</comment>
<comment type="similarity">
    <text evidence="3">Belongs to the low molecular weight phosphotyrosine protein phosphatase family.</text>
</comment>
<gene>
    <name type="primary">ptpB</name>
    <name type="ordered locus">SERP1721</name>
</gene>
<feature type="chain" id="PRO_0000300681" description="Low molecular weight protein-tyrosine-phosphatase PtpB">
    <location>
        <begin position="1"/>
        <end position="139"/>
    </location>
</feature>
<feature type="active site" description="Nucleophile" evidence="2">
    <location>
        <position position="7"/>
    </location>
</feature>
<feature type="active site" evidence="2">
    <location>
        <position position="13"/>
    </location>
</feature>
<feature type="active site" description="Proton donor" evidence="2">
    <location>
        <position position="111"/>
    </location>
</feature>
<name>PTPB_STAEQ</name>
<keyword id="KW-0378">Hydrolase</keyword>
<keyword id="KW-0904">Protein phosphatase</keyword>
<keyword id="KW-1185">Reference proteome</keyword>
<evidence type="ECO:0000250" key="1"/>
<evidence type="ECO:0000250" key="2">
    <source>
        <dbReference type="UniProtKB" id="P11064"/>
    </source>
</evidence>
<evidence type="ECO:0000305" key="3"/>
<protein>
    <recommendedName>
        <fullName>Low molecular weight protein-tyrosine-phosphatase PtpB</fullName>
        <ecNumber>3.1.3.48</ecNumber>
    </recommendedName>
    <alternativeName>
        <fullName>Phosphotyrosine phosphatase B</fullName>
        <shortName>PTPase B</shortName>
    </alternativeName>
</protein>
<sequence length="139" mass="15709">MKIIFVCSGNTCRSPLAESIAKSLLPHDSIASRGLFAVEGQAISKESLELIHKYDLPEPSRAQAFHIDDLDADIILTMTQAHKDLIFSMYGRQSNVFTLNEYVGDTQEIDDPFGGSFDVYEQTYTKIYDLVDKIKFKHE</sequence>
<organism>
    <name type="scientific">Staphylococcus epidermidis (strain ATCC 35984 / DSM 28319 / BCRC 17069 / CCUG 31568 / BM 3577 / RP62A)</name>
    <dbReference type="NCBI Taxonomy" id="176279"/>
    <lineage>
        <taxon>Bacteria</taxon>
        <taxon>Bacillati</taxon>
        <taxon>Bacillota</taxon>
        <taxon>Bacilli</taxon>
        <taxon>Bacillales</taxon>
        <taxon>Staphylococcaceae</taxon>
        <taxon>Staphylococcus</taxon>
    </lineage>
</organism>
<reference key="1">
    <citation type="journal article" date="2005" name="J. Bacteriol.">
        <title>Insights on evolution of virulence and resistance from the complete genome analysis of an early methicillin-resistant Staphylococcus aureus strain and a biofilm-producing methicillin-resistant Staphylococcus epidermidis strain.</title>
        <authorList>
            <person name="Gill S.R."/>
            <person name="Fouts D.E."/>
            <person name="Archer G.L."/>
            <person name="Mongodin E.F."/>
            <person name="DeBoy R.T."/>
            <person name="Ravel J."/>
            <person name="Paulsen I.T."/>
            <person name="Kolonay J.F."/>
            <person name="Brinkac L.M."/>
            <person name="Beanan M.J."/>
            <person name="Dodson R.J."/>
            <person name="Daugherty S.C."/>
            <person name="Madupu R."/>
            <person name="Angiuoli S.V."/>
            <person name="Durkin A.S."/>
            <person name="Haft D.H."/>
            <person name="Vamathevan J.J."/>
            <person name="Khouri H."/>
            <person name="Utterback T.R."/>
            <person name="Lee C."/>
            <person name="Dimitrov G."/>
            <person name="Jiang L."/>
            <person name="Qin H."/>
            <person name="Weidman J."/>
            <person name="Tran K."/>
            <person name="Kang K.H."/>
            <person name="Hance I.R."/>
            <person name="Nelson K.E."/>
            <person name="Fraser C.M."/>
        </authorList>
    </citation>
    <scope>NUCLEOTIDE SEQUENCE [LARGE SCALE GENOMIC DNA]</scope>
    <source>
        <strain>ATCC 35984 / DSM 28319 / BCRC 17069 / CCUG 31568 / BM 3577 / RP62A</strain>
    </source>
</reference>